<accession>Q2YW63</accession>
<gene>
    <name type="primary">gtaB</name>
    <name type="ordered locus">SAB2374c</name>
</gene>
<comment type="function">
    <text evidence="1">Catalyzes the formation of UDP-glucose from glucose-1-phosphate and UTP. This is an intermediate step in the biosynthesis of diglucosyl-diacylglycerol (Glc2-DAG), i.e. the predominant glycolipid found in the S.aureus membrane, which is also used as a membrane anchor for lipoteichoic acid (LTA) (By similarity).</text>
</comment>
<comment type="catalytic activity">
    <reaction>
        <text>alpha-D-glucose 1-phosphate + UTP + H(+) = UDP-alpha-D-glucose + diphosphate</text>
        <dbReference type="Rhea" id="RHEA:19889"/>
        <dbReference type="ChEBI" id="CHEBI:15378"/>
        <dbReference type="ChEBI" id="CHEBI:33019"/>
        <dbReference type="ChEBI" id="CHEBI:46398"/>
        <dbReference type="ChEBI" id="CHEBI:58601"/>
        <dbReference type="ChEBI" id="CHEBI:58885"/>
        <dbReference type="EC" id="2.7.7.9"/>
    </reaction>
</comment>
<comment type="pathway">
    <text>Glycolipid metabolism; diglucosyl-diacylglycerol biosynthesis.</text>
</comment>
<comment type="similarity">
    <text evidence="2">Belongs to the UDPGP type 2 family.</text>
</comment>
<protein>
    <recommendedName>
        <fullName>UTP--glucose-1-phosphate uridylyltransferase</fullName>
        <ecNumber>2.7.7.9</ecNumber>
    </recommendedName>
    <alternativeName>
        <fullName>Alpha-D-glucosyl-1-phosphate uridylyltransferase</fullName>
    </alternativeName>
    <alternativeName>
        <fullName>UDP-glucose pyrophosphorylase</fullName>
        <shortName>UDPGP</shortName>
    </alternativeName>
    <alternativeName>
        <fullName>Uridine diphosphoglucose pyrophosphorylase</fullName>
    </alternativeName>
</protein>
<reference key="1">
    <citation type="journal article" date="2007" name="PLoS ONE">
        <title>Molecular correlates of host specialization in Staphylococcus aureus.</title>
        <authorList>
            <person name="Herron-Olson L."/>
            <person name="Fitzgerald J.R."/>
            <person name="Musser J.M."/>
            <person name="Kapur V."/>
        </authorList>
    </citation>
    <scope>NUCLEOTIDE SEQUENCE [LARGE SCALE GENOMIC DNA]</scope>
    <source>
        <strain>bovine RF122 / ET3-1</strain>
    </source>
</reference>
<sequence length="288" mass="32537">MKKIKKAIIPAAGLGTRFLPATKAMPKEMLPILDKPTIQYIVEEAARAGIEDIIIVTGRHKRAIEDHFDSQKELEMVLKEKGKSELLEKVQYSTELANIFYVRQKEQKGLGHAISSARQFIGNEPFVVLLGDDIVESEVPAVKQLIDVYEETGHSVIGVQEVPEADTHRYGIIDPLTKNGRQYEVKKFVEKPAQGTAPSNLAIMGRYVLTPEIFDYLKTQKEGAGNEIQLTDAIERMNNDNQVYAYDFEGERYDVGEKLGFVKTTIEYALKDDSMREELTRFIKELGL</sequence>
<keyword id="KW-0119">Carbohydrate metabolism</keyword>
<keyword id="KW-0548">Nucleotidyltransferase</keyword>
<keyword id="KW-0808">Transferase</keyword>
<name>GTAB_STAAB</name>
<feature type="chain" id="PRO_0000308303" description="UTP--glucose-1-phosphate uridylyltransferase">
    <location>
        <begin position="1"/>
        <end position="288"/>
    </location>
</feature>
<organism>
    <name type="scientific">Staphylococcus aureus (strain bovine RF122 / ET3-1)</name>
    <dbReference type="NCBI Taxonomy" id="273036"/>
    <lineage>
        <taxon>Bacteria</taxon>
        <taxon>Bacillati</taxon>
        <taxon>Bacillota</taxon>
        <taxon>Bacilli</taxon>
        <taxon>Bacillales</taxon>
        <taxon>Staphylococcaceae</taxon>
        <taxon>Staphylococcus</taxon>
    </lineage>
</organism>
<dbReference type="EC" id="2.7.7.9"/>
<dbReference type="EMBL" id="AJ938182">
    <property type="protein sequence ID" value="CAI82062.1"/>
    <property type="molecule type" value="Genomic_DNA"/>
</dbReference>
<dbReference type="RefSeq" id="WP_000721339.1">
    <property type="nucleotide sequence ID" value="NC_007622.1"/>
</dbReference>
<dbReference type="SMR" id="Q2YW63"/>
<dbReference type="KEGG" id="sab:SAB2374c"/>
<dbReference type="HOGENOM" id="CLU_029499_1_2_9"/>
<dbReference type="UniPathway" id="UPA00894"/>
<dbReference type="GO" id="GO:0003983">
    <property type="term" value="F:UTP:glucose-1-phosphate uridylyltransferase activity"/>
    <property type="evidence" value="ECO:0007669"/>
    <property type="project" value="UniProtKB-EC"/>
</dbReference>
<dbReference type="GO" id="GO:0009246">
    <property type="term" value="P:enterobacterial common antigen biosynthetic process"/>
    <property type="evidence" value="ECO:0007669"/>
    <property type="project" value="UniProtKB-UniPathway"/>
</dbReference>
<dbReference type="GO" id="GO:0006011">
    <property type="term" value="P:UDP-alpha-D-glucose metabolic process"/>
    <property type="evidence" value="ECO:0007669"/>
    <property type="project" value="InterPro"/>
</dbReference>
<dbReference type="CDD" id="cd02541">
    <property type="entry name" value="UGPase_prokaryotic"/>
    <property type="match status" value="1"/>
</dbReference>
<dbReference type="Gene3D" id="3.90.550.10">
    <property type="entry name" value="Spore Coat Polysaccharide Biosynthesis Protein SpsA, Chain A"/>
    <property type="match status" value="1"/>
</dbReference>
<dbReference type="InterPro" id="IPR005771">
    <property type="entry name" value="GalU_uridylyltTrfase_bac/arc"/>
</dbReference>
<dbReference type="InterPro" id="IPR005835">
    <property type="entry name" value="NTP_transferase_dom"/>
</dbReference>
<dbReference type="InterPro" id="IPR029044">
    <property type="entry name" value="Nucleotide-diphossugar_trans"/>
</dbReference>
<dbReference type="NCBIfam" id="TIGR01099">
    <property type="entry name" value="galU"/>
    <property type="match status" value="1"/>
</dbReference>
<dbReference type="PANTHER" id="PTHR43197">
    <property type="entry name" value="UTP--GLUCOSE-1-PHOSPHATE URIDYLYLTRANSFERASE"/>
    <property type="match status" value="1"/>
</dbReference>
<dbReference type="PANTHER" id="PTHR43197:SF1">
    <property type="entry name" value="UTP--GLUCOSE-1-PHOSPHATE URIDYLYLTRANSFERASE"/>
    <property type="match status" value="1"/>
</dbReference>
<dbReference type="Pfam" id="PF00483">
    <property type="entry name" value="NTP_transferase"/>
    <property type="match status" value="1"/>
</dbReference>
<dbReference type="SUPFAM" id="SSF53448">
    <property type="entry name" value="Nucleotide-diphospho-sugar transferases"/>
    <property type="match status" value="1"/>
</dbReference>
<proteinExistence type="inferred from homology"/>
<evidence type="ECO:0000250" key="1"/>
<evidence type="ECO:0000305" key="2"/>